<reference key="1">
    <citation type="journal article" date="2009" name="Genome Biol.">
        <title>Genomic and genetic analyses of diversity and plant interactions of Pseudomonas fluorescens.</title>
        <authorList>
            <person name="Silby M.W."/>
            <person name="Cerdeno-Tarraga A.M."/>
            <person name="Vernikos G.S."/>
            <person name="Giddens S.R."/>
            <person name="Jackson R.W."/>
            <person name="Preston G.M."/>
            <person name="Zhang X.-X."/>
            <person name="Moon C.D."/>
            <person name="Gehrig S.M."/>
            <person name="Godfrey S.A.C."/>
            <person name="Knight C.G."/>
            <person name="Malone J.G."/>
            <person name="Robinson Z."/>
            <person name="Spiers A.J."/>
            <person name="Harris S."/>
            <person name="Challis G.L."/>
            <person name="Yaxley A.M."/>
            <person name="Harris D."/>
            <person name="Seeger K."/>
            <person name="Murphy L."/>
            <person name="Rutter S."/>
            <person name="Squares R."/>
            <person name="Quail M.A."/>
            <person name="Saunders E."/>
            <person name="Mavromatis K."/>
            <person name="Brettin T.S."/>
            <person name="Bentley S.D."/>
            <person name="Hothersall J."/>
            <person name="Stephens E."/>
            <person name="Thomas C.M."/>
            <person name="Parkhill J."/>
            <person name="Levy S.B."/>
            <person name="Rainey P.B."/>
            <person name="Thomson N.R."/>
        </authorList>
    </citation>
    <scope>NUCLEOTIDE SEQUENCE [LARGE SCALE GENOMIC DNA]</scope>
    <source>
        <strain>SBW25</strain>
    </source>
</reference>
<dbReference type="EMBL" id="AM181176">
    <property type="protein sequence ID" value="CAY47256.1"/>
    <property type="molecule type" value="Genomic_DNA"/>
</dbReference>
<dbReference type="SMR" id="C3KE01"/>
<dbReference type="STRING" id="294.SRM1_01003"/>
<dbReference type="PATRIC" id="fig|216595.4.peg.1225"/>
<dbReference type="eggNOG" id="COG3022">
    <property type="taxonomic scope" value="Bacteria"/>
</dbReference>
<dbReference type="HOGENOM" id="CLU_061989_0_0_6"/>
<dbReference type="OrthoDB" id="9777133at2"/>
<dbReference type="GO" id="GO:0005829">
    <property type="term" value="C:cytosol"/>
    <property type="evidence" value="ECO:0007669"/>
    <property type="project" value="TreeGrafter"/>
</dbReference>
<dbReference type="GO" id="GO:0033194">
    <property type="term" value="P:response to hydroperoxide"/>
    <property type="evidence" value="ECO:0007669"/>
    <property type="project" value="TreeGrafter"/>
</dbReference>
<dbReference type="HAMAP" id="MF_00652">
    <property type="entry name" value="UPF0246"/>
    <property type="match status" value="1"/>
</dbReference>
<dbReference type="InterPro" id="IPR005583">
    <property type="entry name" value="YaaA"/>
</dbReference>
<dbReference type="NCBIfam" id="NF002541">
    <property type="entry name" value="PRK02101.1-1"/>
    <property type="match status" value="1"/>
</dbReference>
<dbReference type="NCBIfam" id="NF002542">
    <property type="entry name" value="PRK02101.1-3"/>
    <property type="match status" value="1"/>
</dbReference>
<dbReference type="PANTHER" id="PTHR30283:SF4">
    <property type="entry name" value="PEROXIDE STRESS RESISTANCE PROTEIN YAAA"/>
    <property type="match status" value="1"/>
</dbReference>
<dbReference type="PANTHER" id="PTHR30283">
    <property type="entry name" value="PEROXIDE STRESS RESPONSE PROTEIN YAAA"/>
    <property type="match status" value="1"/>
</dbReference>
<dbReference type="Pfam" id="PF03883">
    <property type="entry name" value="H2O2_YaaD"/>
    <property type="match status" value="1"/>
</dbReference>
<sequence>MLMVISPAKTLDFESTPVTPRFTQPQYLDHSQELIEQLRELSPAQISELMHVSDKIGGLNAARFGSWTPAFTQANAKQALLAFKGDVYTGLNADTFSDADFTYAQDHLRMLSGLYGLLRPLDLMMPYRLEMGTKLPNARGKDLYAFWGTRISEWLNEALAAQGDDVLLNLASNEYFSAVKRTALNARIINTEFKDLKNGQYKIISFYAKKARGMMSRFVIEERINDPAKLKQFDVQGYRFNAEQSKPDNLVFLRDHAPE</sequence>
<organism>
    <name type="scientific">Pseudomonas fluorescens (strain SBW25)</name>
    <dbReference type="NCBI Taxonomy" id="216595"/>
    <lineage>
        <taxon>Bacteria</taxon>
        <taxon>Pseudomonadati</taxon>
        <taxon>Pseudomonadota</taxon>
        <taxon>Gammaproteobacteria</taxon>
        <taxon>Pseudomonadales</taxon>
        <taxon>Pseudomonadaceae</taxon>
        <taxon>Pseudomonas</taxon>
    </lineage>
</organism>
<evidence type="ECO:0000255" key="1">
    <source>
        <dbReference type="HAMAP-Rule" id="MF_00652"/>
    </source>
</evidence>
<accession>C3KE01</accession>
<comment type="similarity">
    <text evidence="1">Belongs to the UPF0246 family.</text>
</comment>
<name>Y992_PSEFS</name>
<gene>
    <name type="ordered locus">PFLU_0992</name>
</gene>
<protein>
    <recommendedName>
        <fullName evidence="1">UPF0246 protein PFLU_0992</fullName>
    </recommendedName>
</protein>
<proteinExistence type="inferred from homology"/>
<feature type="chain" id="PRO_1000212428" description="UPF0246 protein PFLU_0992">
    <location>
        <begin position="1"/>
        <end position="259"/>
    </location>
</feature>